<accession>A1SAM0</accession>
<keyword id="KW-0963">Cytoplasm</keyword>
<keyword id="KW-0489">Methyltransferase</keyword>
<keyword id="KW-1185">Reference proteome</keyword>
<keyword id="KW-0949">S-adenosyl-L-methionine</keyword>
<keyword id="KW-0808">Transferase</keyword>
<proteinExistence type="inferred from homology"/>
<reference key="1">
    <citation type="submission" date="2006-12" db="EMBL/GenBank/DDBJ databases">
        <title>Complete sequence of Shewanella amazonensis SB2B.</title>
        <authorList>
            <consortium name="US DOE Joint Genome Institute"/>
            <person name="Copeland A."/>
            <person name="Lucas S."/>
            <person name="Lapidus A."/>
            <person name="Barry K."/>
            <person name="Detter J.C."/>
            <person name="Glavina del Rio T."/>
            <person name="Hammon N."/>
            <person name="Israni S."/>
            <person name="Dalin E."/>
            <person name="Tice H."/>
            <person name="Pitluck S."/>
            <person name="Munk A.C."/>
            <person name="Brettin T."/>
            <person name="Bruce D."/>
            <person name="Han C."/>
            <person name="Tapia R."/>
            <person name="Gilna P."/>
            <person name="Schmutz J."/>
            <person name="Larimer F."/>
            <person name="Land M."/>
            <person name="Hauser L."/>
            <person name="Kyrpides N."/>
            <person name="Mikhailova N."/>
            <person name="Fredrickson J."/>
            <person name="Richardson P."/>
        </authorList>
    </citation>
    <scope>NUCLEOTIDE SEQUENCE [LARGE SCALE GENOMIC DNA]</scope>
    <source>
        <strain>ATCC BAA-1098 / SB2B</strain>
    </source>
</reference>
<gene>
    <name evidence="1" type="primary">prmA</name>
    <name type="ordered locus">Sama_3224</name>
</gene>
<organism>
    <name type="scientific">Shewanella amazonensis (strain ATCC BAA-1098 / SB2B)</name>
    <dbReference type="NCBI Taxonomy" id="326297"/>
    <lineage>
        <taxon>Bacteria</taxon>
        <taxon>Pseudomonadati</taxon>
        <taxon>Pseudomonadota</taxon>
        <taxon>Gammaproteobacteria</taxon>
        <taxon>Alteromonadales</taxon>
        <taxon>Shewanellaceae</taxon>
        <taxon>Shewanella</taxon>
    </lineage>
</organism>
<feature type="chain" id="PRO_1000046083" description="Ribosomal protein L11 methyltransferase">
    <location>
        <begin position="1"/>
        <end position="295"/>
    </location>
</feature>
<feature type="binding site" evidence="1">
    <location>
        <position position="145"/>
    </location>
    <ligand>
        <name>S-adenosyl-L-methionine</name>
        <dbReference type="ChEBI" id="CHEBI:59789"/>
    </ligand>
</feature>
<feature type="binding site" evidence="1">
    <location>
        <position position="166"/>
    </location>
    <ligand>
        <name>S-adenosyl-L-methionine</name>
        <dbReference type="ChEBI" id="CHEBI:59789"/>
    </ligand>
</feature>
<feature type="binding site" evidence="1">
    <location>
        <position position="188"/>
    </location>
    <ligand>
        <name>S-adenosyl-L-methionine</name>
        <dbReference type="ChEBI" id="CHEBI:59789"/>
    </ligand>
</feature>
<feature type="binding site" evidence="1">
    <location>
        <position position="230"/>
    </location>
    <ligand>
        <name>S-adenosyl-L-methionine</name>
        <dbReference type="ChEBI" id="CHEBI:59789"/>
    </ligand>
</feature>
<dbReference type="EC" id="2.1.1.-" evidence="1"/>
<dbReference type="EMBL" id="CP000507">
    <property type="protein sequence ID" value="ABM01427.1"/>
    <property type="molecule type" value="Genomic_DNA"/>
</dbReference>
<dbReference type="RefSeq" id="WP_011761331.1">
    <property type="nucleotide sequence ID" value="NC_008700.1"/>
</dbReference>
<dbReference type="SMR" id="A1SAM0"/>
<dbReference type="STRING" id="326297.Sama_3224"/>
<dbReference type="KEGG" id="saz:Sama_3224"/>
<dbReference type="eggNOG" id="COG2264">
    <property type="taxonomic scope" value="Bacteria"/>
</dbReference>
<dbReference type="HOGENOM" id="CLU_049382_4_1_6"/>
<dbReference type="OrthoDB" id="9785995at2"/>
<dbReference type="Proteomes" id="UP000009175">
    <property type="component" value="Chromosome"/>
</dbReference>
<dbReference type="GO" id="GO:0005829">
    <property type="term" value="C:cytosol"/>
    <property type="evidence" value="ECO:0007669"/>
    <property type="project" value="TreeGrafter"/>
</dbReference>
<dbReference type="GO" id="GO:0016279">
    <property type="term" value="F:protein-lysine N-methyltransferase activity"/>
    <property type="evidence" value="ECO:0007669"/>
    <property type="project" value="TreeGrafter"/>
</dbReference>
<dbReference type="GO" id="GO:0032259">
    <property type="term" value="P:methylation"/>
    <property type="evidence" value="ECO:0007669"/>
    <property type="project" value="UniProtKB-KW"/>
</dbReference>
<dbReference type="Gene3D" id="3.40.50.150">
    <property type="entry name" value="Vaccinia Virus protein VP39"/>
    <property type="match status" value="1"/>
</dbReference>
<dbReference type="HAMAP" id="MF_00735">
    <property type="entry name" value="Methyltr_PrmA"/>
    <property type="match status" value="1"/>
</dbReference>
<dbReference type="InterPro" id="IPR050078">
    <property type="entry name" value="Ribosomal_L11_MeTrfase_PrmA"/>
</dbReference>
<dbReference type="InterPro" id="IPR004498">
    <property type="entry name" value="Ribosomal_PrmA_MeTrfase"/>
</dbReference>
<dbReference type="InterPro" id="IPR029063">
    <property type="entry name" value="SAM-dependent_MTases_sf"/>
</dbReference>
<dbReference type="NCBIfam" id="TIGR00406">
    <property type="entry name" value="prmA"/>
    <property type="match status" value="1"/>
</dbReference>
<dbReference type="PANTHER" id="PTHR43648">
    <property type="entry name" value="ELECTRON TRANSFER FLAVOPROTEIN BETA SUBUNIT LYSINE METHYLTRANSFERASE"/>
    <property type="match status" value="1"/>
</dbReference>
<dbReference type="PANTHER" id="PTHR43648:SF1">
    <property type="entry name" value="ELECTRON TRANSFER FLAVOPROTEIN BETA SUBUNIT LYSINE METHYLTRANSFERASE"/>
    <property type="match status" value="1"/>
</dbReference>
<dbReference type="Pfam" id="PF06325">
    <property type="entry name" value="PrmA"/>
    <property type="match status" value="1"/>
</dbReference>
<dbReference type="PIRSF" id="PIRSF000401">
    <property type="entry name" value="RPL11_MTase"/>
    <property type="match status" value="1"/>
</dbReference>
<dbReference type="SUPFAM" id="SSF53335">
    <property type="entry name" value="S-adenosyl-L-methionine-dependent methyltransferases"/>
    <property type="match status" value="1"/>
</dbReference>
<evidence type="ECO:0000255" key="1">
    <source>
        <dbReference type="HAMAP-Rule" id="MF_00735"/>
    </source>
</evidence>
<protein>
    <recommendedName>
        <fullName evidence="1">Ribosomal protein L11 methyltransferase</fullName>
        <shortName evidence="1">L11 Mtase</shortName>
        <ecNumber evidence="1">2.1.1.-</ecNumber>
    </recommendedName>
</protein>
<comment type="function">
    <text evidence="1">Methylates ribosomal protein L11.</text>
</comment>
<comment type="catalytic activity">
    <reaction evidence="1">
        <text>L-lysyl-[protein] + 3 S-adenosyl-L-methionine = N(6),N(6),N(6)-trimethyl-L-lysyl-[protein] + 3 S-adenosyl-L-homocysteine + 3 H(+)</text>
        <dbReference type="Rhea" id="RHEA:54192"/>
        <dbReference type="Rhea" id="RHEA-COMP:9752"/>
        <dbReference type="Rhea" id="RHEA-COMP:13826"/>
        <dbReference type="ChEBI" id="CHEBI:15378"/>
        <dbReference type="ChEBI" id="CHEBI:29969"/>
        <dbReference type="ChEBI" id="CHEBI:57856"/>
        <dbReference type="ChEBI" id="CHEBI:59789"/>
        <dbReference type="ChEBI" id="CHEBI:61961"/>
    </reaction>
</comment>
<comment type="subcellular location">
    <subcellularLocation>
        <location evidence="1">Cytoplasm</location>
    </subcellularLocation>
</comment>
<comment type="similarity">
    <text evidence="1">Belongs to the methyltransferase superfamily. PrmA family.</text>
</comment>
<name>PRMA_SHEAM</name>
<sequence length="295" mass="32548">MPWIQLRLHSSSEHADAISDLLMDEGSVSITFEDGKDQPIFEPKLGETPLWNDTVVVALFDADFDLAPVVDMLKSLPFLGSELKYKIEQIEDKDWVREWMDSYHPIQFGKRLWICPSWREVPDPEAVNVILDPGLAFGTGTHPTTALCLEWLDSLDLAGKDIIDFGCGSGILAVAALKLGAAKATGIDIDYQAIDASRDNAQRNQVEDRLALYLPEDQPAGLKAEVLVANILAGPLRELAPLIQALVQPGGKLALSGLLKEQAAEISECYAQWFDMDQPAHKDDWSRLTGVRKSL</sequence>